<name>SELU_SALNS</name>
<evidence type="ECO:0000255" key="1">
    <source>
        <dbReference type="HAMAP-Rule" id="MF_01622"/>
    </source>
</evidence>
<reference key="1">
    <citation type="journal article" date="2011" name="J. Bacteriol.">
        <title>Comparative genomics of 28 Salmonella enterica isolates: evidence for CRISPR-mediated adaptive sublineage evolution.</title>
        <authorList>
            <person name="Fricke W.F."/>
            <person name="Mammel M.K."/>
            <person name="McDermott P.F."/>
            <person name="Tartera C."/>
            <person name="White D.G."/>
            <person name="Leclerc J.E."/>
            <person name="Ravel J."/>
            <person name="Cebula T.A."/>
        </authorList>
    </citation>
    <scope>NUCLEOTIDE SEQUENCE [LARGE SCALE GENOMIC DNA]</scope>
    <source>
        <strain>SL254</strain>
    </source>
</reference>
<organism>
    <name type="scientific">Salmonella newport (strain SL254)</name>
    <dbReference type="NCBI Taxonomy" id="423368"/>
    <lineage>
        <taxon>Bacteria</taxon>
        <taxon>Pseudomonadati</taxon>
        <taxon>Pseudomonadota</taxon>
        <taxon>Gammaproteobacteria</taxon>
        <taxon>Enterobacterales</taxon>
        <taxon>Enterobacteriaceae</taxon>
        <taxon>Salmonella</taxon>
    </lineage>
</organism>
<sequence length="364" mass="41324">MQDRQKAQDYRALLLADTPLIDVRAPIEFEQGAMPGAINLPLMMDDERAAVGTCYKRQGADAALALGHRLVCGDIRQQRLEAWKAAYQRFPNGYLCCARGGQRSHIVQRWLQETGIDCPLIEGGYKALRQTAIQATWQLAQKPILLIGGCTGSGKTQLVRQQPNGVDLEGLARHRGSSFGRTLNPQLSQASFENKLAVELLKINARQTLKRWVLEDEGRTIGANHLPECLRERMAQAPIAVVEDPFALRLERLREEYFIRMHHDFTHAYGDEAGWQAYSEYLHHGLFAIRRRLGLQRFAELTDTLDRALAEQLSSGSTDGHMAWLVPLLNEYYDPMYRYQLEKKAANIVFRGPWQDVANWLKAQ</sequence>
<feature type="chain" id="PRO_1000186084" description="tRNA 2-selenouridine synthase">
    <location>
        <begin position="1"/>
        <end position="364"/>
    </location>
</feature>
<feature type="domain" description="Rhodanese" evidence="1">
    <location>
        <begin position="14"/>
        <end position="137"/>
    </location>
</feature>
<feature type="active site" description="S-selanylcysteine intermediate" evidence="1">
    <location>
        <position position="97"/>
    </location>
</feature>
<gene>
    <name evidence="1" type="primary">selU</name>
    <name type="ordered locus">SNSL254_A0567</name>
</gene>
<proteinExistence type="inferred from homology"/>
<comment type="function">
    <text evidence="1">Involved in the post-transcriptional modification of the uridine at the wobble position (U34) of tRNA(Lys), tRNA(Glu) and tRNA(Gln). Catalyzes the conversion of 2-thiouridine (S2U-RNA) to 2-selenouridine (Se2U-RNA). Acts in a two-step process involving geranylation of 2-thiouridine (S2U) to S-geranyl-2-thiouridine (geS2U) and subsequent selenation of the latter derivative to 2-selenouridine (Se2U) in the tRNA chain.</text>
</comment>
<comment type="catalytic activity">
    <reaction evidence="1">
        <text>5-methylaminomethyl-2-thiouridine(34) in tRNA + selenophosphate + (2E)-geranyl diphosphate + H2O + H(+) = 5-methylaminomethyl-2-selenouridine(34) in tRNA + (2E)-thiogeraniol + phosphate + diphosphate</text>
        <dbReference type="Rhea" id="RHEA:42716"/>
        <dbReference type="Rhea" id="RHEA-COMP:10195"/>
        <dbReference type="Rhea" id="RHEA-COMP:10196"/>
        <dbReference type="ChEBI" id="CHEBI:15377"/>
        <dbReference type="ChEBI" id="CHEBI:15378"/>
        <dbReference type="ChEBI" id="CHEBI:16144"/>
        <dbReference type="ChEBI" id="CHEBI:33019"/>
        <dbReference type="ChEBI" id="CHEBI:43474"/>
        <dbReference type="ChEBI" id="CHEBI:58057"/>
        <dbReference type="ChEBI" id="CHEBI:74455"/>
        <dbReference type="ChEBI" id="CHEBI:82743"/>
        <dbReference type="ChEBI" id="CHEBI:143703"/>
        <dbReference type="EC" id="2.9.1.3"/>
    </reaction>
    <physiologicalReaction direction="left-to-right" evidence="1">
        <dbReference type="Rhea" id="RHEA:42717"/>
    </physiologicalReaction>
</comment>
<comment type="catalytic activity">
    <reaction evidence="1">
        <text>5-methylaminomethyl-2-thiouridine(34) in tRNA + (2E)-geranyl diphosphate = 5-methylaminomethyl-S-(2E)-geranyl-thiouridine(34) in tRNA + diphosphate</text>
        <dbReference type="Rhea" id="RHEA:14085"/>
        <dbReference type="Rhea" id="RHEA-COMP:10195"/>
        <dbReference type="Rhea" id="RHEA-COMP:14654"/>
        <dbReference type="ChEBI" id="CHEBI:33019"/>
        <dbReference type="ChEBI" id="CHEBI:58057"/>
        <dbReference type="ChEBI" id="CHEBI:74455"/>
        <dbReference type="ChEBI" id="CHEBI:140632"/>
    </reaction>
    <physiologicalReaction direction="left-to-right" evidence="1">
        <dbReference type="Rhea" id="RHEA:14086"/>
    </physiologicalReaction>
</comment>
<comment type="catalytic activity">
    <reaction evidence="1">
        <text>5-methylaminomethyl-S-(2E)-geranyl-thiouridine(34) in tRNA + selenophosphate + H(+) = 5-methylaminomethyl-2-(Se-phospho)selenouridine(34) in tRNA + (2E)-thiogeraniol</text>
        <dbReference type="Rhea" id="RHEA:60172"/>
        <dbReference type="Rhea" id="RHEA-COMP:14654"/>
        <dbReference type="Rhea" id="RHEA-COMP:15523"/>
        <dbReference type="ChEBI" id="CHEBI:15378"/>
        <dbReference type="ChEBI" id="CHEBI:16144"/>
        <dbReference type="ChEBI" id="CHEBI:140632"/>
        <dbReference type="ChEBI" id="CHEBI:143702"/>
        <dbReference type="ChEBI" id="CHEBI:143703"/>
    </reaction>
    <physiologicalReaction direction="left-to-right" evidence="1">
        <dbReference type="Rhea" id="RHEA:60173"/>
    </physiologicalReaction>
</comment>
<comment type="catalytic activity">
    <reaction evidence="1">
        <text>5-methylaminomethyl-2-(Se-phospho)selenouridine(34) in tRNA + H2O = 5-methylaminomethyl-2-selenouridine(34) in tRNA + phosphate</text>
        <dbReference type="Rhea" id="RHEA:60176"/>
        <dbReference type="Rhea" id="RHEA-COMP:10196"/>
        <dbReference type="Rhea" id="RHEA-COMP:15523"/>
        <dbReference type="ChEBI" id="CHEBI:15377"/>
        <dbReference type="ChEBI" id="CHEBI:43474"/>
        <dbReference type="ChEBI" id="CHEBI:82743"/>
        <dbReference type="ChEBI" id="CHEBI:143702"/>
    </reaction>
    <physiologicalReaction direction="left-to-right" evidence="1">
        <dbReference type="Rhea" id="RHEA:60177"/>
    </physiologicalReaction>
</comment>
<comment type="subunit">
    <text evidence="1">Monomer.</text>
</comment>
<comment type="similarity">
    <text evidence="1">Belongs to the SelU family.</text>
</comment>
<keyword id="KW-0711">Selenium</keyword>
<keyword id="KW-0808">Transferase</keyword>
<accession>B4SXL9</accession>
<dbReference type="EC" id="2.9.1.3" evidence="1"/>
<dbReference type="EMBL" id="CP001113">
    <property type="protein sequence ID" value="ACF64292.1"/>
    <property type="molecule type" value="Genomic_DNA"/>
</dbReference>
<dbReference type="SMR" id="B4SXL9"/>
<dbReference type="KEGG" id="see:SNSL254_A0567"/>
<dbReference type="HOGENOM" id="CLU_043456_1_0_6"/>
<dbReference type="Proteomes" id="UP000008824">
    <property type="component" value="Chromosome"/>
</dbReference>
<dbReference type="GO" id="GO:0016765">
    <property type="term" value="F:transferase activity, transferring alkyl or aryl (other than methyl) groups"/>
    <property type="evidence" value="ECO:0007669"/>
    <property type="project" value="UniProtKB-UniRule"/>
</dbReference>
<dbReference type="GO" id="GO:0043828">
    <property type="term" value="F:tRNA 2-selenouridine synthase activity"/>
    <property type="evidence" value="ECO:0007669"/>
    <property type="project" value="UniProtKB-EC"/>
</dbReference>
<dbReference type="GO" id="GO:0002098">
    <property type="term" value="P:tRNA wobble uridine modification"/>
    <property type="evidence" value="ECO:0007669"/>
    <property type="project" value="UniProtKB-UniRule"/>
</dbReference>
<dbReference type="CDD" id="cd01520">
    <property type="entry name" value="RHOD_YbbB"/>
    <property type="match status" value="1"/>
</dbReference>
<dbReference type="FunFam" id="3.40.250.10:FF:000009">
    <property type="entry name" value="tRNA 2-selenouridine/geranyl-2-thiouridine synthase"/>
    <property type="match status" value="1"/>
</dbReference>
<dbReference type="Gene3D" id="3.40.250.10">
    <property type="entry name" value="Rhodanese-like domain"/>
    <property type="match status" value="1"/>
</dbReference>
<dbReference type="HAMAP" id="MF_01622">
    <property type="entry name" value="tRNA_sel_U_synth"/>
    <property type="match status" value="1"/>
</dbReference>
<dbReference type="InterPro" id="IPR001763">
    <property type="entry name" value="Rhodanese-like_dom"/>
</dbReference>
<dbReference type="InterPro" id="IPR036873">
    <property type="entry name" value="Rhodanese-like_dom_sf"/>
</dbReference>
<dbReference type="InterPro" id="IPR017582">
    <property type="entry name" value="SelU"/>
</dbReference>
<dbReference type="NCBIfam" id="NF008749">
    <property type="entry name" value="PRK11784.1-1"/>
    <property type="match status" value="1"/>
</dbReference>
<dbReference type="NCBIfam" id="NF008751">
    <property type="entry name" value="PRK11784.1-3"/>
    <property type="match status" value="1"/>
</dbReference>
<dbReference type="NCBIfam" id="TIGR03167">
    <property type="entry name" value="tRNA_sel_U_synt"/>
    <property type="match status" value="1"/>
</dbReference>
<dbReference type="PANTHER" id="PTHR30401">
    <property type="entry name" value="TRNA 2-SELENOURIDINE SYNTHASE"/>
    <property type="match status" value="1"/>
</dbReference>
<dbReference type="PANTHER" id="PTHR30401:SF0">
    <property type="entry name" value="TRNA 2-SELENOURIDINE SYNTHASE"/>
    <property type="match status" value="1"/>
</dbReference>
<dbReference type="Pfam" id="PF00581">
    <property type="entry name" value="Rhodanese"/>
    <property type="match status" value="1"/>
</dbReference>
<dbReference type="SMART" id="SM00450">
    <property type="entry name" value="RHOD"/>
    <property type="match status" value="1"/>
</dbReference>
<dbReference type="SUPFAM" id="SSF52821">
    <property type="entry name" value="Rhodanese/Cell cycle control phosphatase"/>
    <property type="match status" value="1"/>
</dbReference>
<dbReference type="PROSITE" id="PS50206">
    <property type="entry name" value="RHODANESE_3"/>
    <property type="match status" value="1"/>
</dbReference>
<protein>
    <recommendedName>
        <fullName evidence="1">tRNA 2-selenouridine synthase</fullName>
        <ecNumber evidence="1">2.9.1.3</ecNumber>
    </recommendedName>
</protein>